<dbReference type="EMBL" id="CP000107">
    <property type="protein sequence ID" value="AAZ68918.1"/>
    <property type="molecule type" value="Genomic_DNA"/>
</dbReference>
<dbReference type="RefSeq" id="WP_011304994.1">
    <property type="nucleotide sequence ID" value="NC_007354.1"/>
</dbReference>
<dbReference type="SMR" id="Q3YQT7"/>
<dbReference type="FunCoup" id="Q3YQT7">
    <property type="interactions" value="314"/>
</dbReference>
<dbReference type="STRING" id="269484.Ecaj_0887"/>
<dbReference type="KEGG" id="ecn:Ecaj_0887"/>
<dbReference type="eggNOG" id="COG0468">
    <property type="taxonomic scope" value="Bacteria"/>
</dbReference>
<dbReference type="HOGENOM" id="CLU_040469_3_2_5"/>
<dbReference type="InParanoid" id="Q3YQT7"/>
<dbReference type="Proteomes" id="UP000000435">
    <property type="component" value="Chromosome"/>
</dbReference>
<dbReference type="GO" id="GO:0005829">
    <property type="term" value="C:cytosol"/>
    <property type="evidence" value="ECO:0007669"/>
    <property type="project" value="TreeGrafter"/>
</dbReference>
<dbReference type="GO" id="GO:0005524">
    <property type="term" value="F:ATP binding"/>
    <property type="evidence" value="ECO:0007669"/>
    <property type="project" value="UniProtKB-UniRule"/>
</dbReference>
<dbReference type="GO" id="GO:0016887">
    <property type="term" value="F:ATP hydrolysis activity"/>
    <property type="evidence" value="ECO:0007669"/>
    <property type="project" value="InterPro"/>
</dbReference>
<dbReference type="GO" id="GO:0140664">
    <property type="term" value="F:ATP-dependent DNA damage sensor activity"/>
    <property type="evidence" value="ECO:0007669"/>
    <property type="project" value="InterPro"/>
</dbReference>
<dbReference type="GO" id="GO:0003684">
    <property type="term" value="F:damaged DNA binding"/>
    <property type="evidence" value="ECO:0007669"/>
    <property type="project" value="UniProtKB-UniRule"/>
</dbReference>
<dbReference type="GO" id="GO:0003697">
    <property type="term" value="F:single-stranded DNA binding"/>
    <property type="evidence" value="ECO:0007669"/>
    <property type="project" value="UniProtKB-UniRule"/>
</dbReference>
<dbReference type="GO" id="GO:0006310">
    <property type="term" value="P:DNA recombination"/>
    <property type="evidence" value="ECO:0007669"/>
    <property type="project" value="UniProtKB-UniRule"/>
</dbReference>
<dbReference type="GO" id="GO:0006281">
    <property type="term" value="P:DNA repair"/>
    <property type="evidence" value="ECO:0007669"/>
    <property type="project" value="UniProtKB-UniRule"/>
</dbReference>
<dbReference type="GO" id="GO:0009432">
    <property type="term" value="P:SOS response"/>
    <property type="evidence" value="ECO:0007669"/>
    <property type="project" value="UniProtKB-UniRule"/>
</dbReference>
<dbReference type="CDD" id="cd00983">
    <property type="entry name" value="RecA"/>
    <property type="match status" value="1"/>
</dbReference>
<dbReference type="FunFam" id="3.40.50.300:FF:000087">
    <property type="entry name" value="Recombinase RecA"/>
    <property type="match status" value="1"/>
</dbReference>
<dbReference type="Gene3D" id="3.40.50.300">
    <property type="entry name" value="P-loop containing nucleotide triphosphate hydrolases"/>
    <property type="match status" value="1"/>
</dbReference>
<dbReference type="HAMAP" id="MF_00268">
    <property type="entry name" value="RecA"/>
    <property type="match status" value="1"/>
</dbReference>
<dbReference type="InterPro" id="IPR003593">
    <property type="entry name" value="AAA+_ATPase"/>
</dbReference>
<dbReference type="InterPro" id="IPR013765">
    <property type="entry name" value="DNA_recomb/repair_RecA"/>
</dbReference>
<dbReference type="InterPro" id="IPR020584">
    <property type="entry name" value="DNA_recomb/repair_RecA_CS"/>
</dbReference>
<dbReference type="InterPro" id="IPR027417">
    <property type="entry name" value="P-loop_NTPase"/>
</dbReference>
<dbReference type="InterPro" id="IPR049261">
    <property type="entry name" value="RecA-like_C"/>
</dbReference>
<dbReference type="InterPro" id="IPR049428">
    <property type="entry name" value="RecA-like_N"/>
</dbReference>
<dbReference type="InterPro" id="IPR020588">
    <property type="entry name" value="RecA_ATP-bd"/>
</dbReference>
<dbReference type="InterPro" id="IPR023400">
    <property type="entry name" value="RecA_C_sf"/>
</dbReference>
<dbReference type="InterPro" id="IPR020587">
    <property type="entry name" value="RecA_monomer-monomer_interface"/>
</dbReference>
<dbReference type="NCBIfam" id="TIGR02012">
    <property type="entry name" value="tigrfam_recA"/>
    <property type="match status" value="1"/>
</dbReference>
<dbReference type="PANTHER" id="PTHR45900:SF1">
    <property type="entry name" value="MITOCHONDRIAL DNA REPAIR PROTEIN RECA HOMOLOG-RELATED"/>
    <property type="match status" value="1"/>
</dbReference>
<dbReference type="PANTHER" id="PTHR45900">
    <property type="entry name" value="RECA"/>
    <property type="match status" value="1"/>
</dbReference>
<dbReference type="Pfam" id="PF00154">
    <property type="entry name" value="RecA"/>
    <property type="match status" value="1"/>
</dbReference>
<dbReference type="Pfam" id="PF21096">
    <property type="entry name" value="RecA_C"/>
    <property type="match status" value="1"/>
</dbReference>
<dbReference type="PRINTS" id="PR00142">
    <property type="entry name" value="RECA"/>
</dbReference>
<dbReference type="SMART" id="SM00382">
    <property type="entry name" value="AAA"/>
    <property type="match status" value="1"/>
</dbReference>
<dbReference type="SUPFAM" id="SSF52540">
    <property type="entry name" value="P-loop containing nucleoside triphosphate hydrolases"/>
    <property type="match status" value="1"/>
</dbReference>
<dbReference type="SUPFAM" id="SSF54752">
    <property type="entry name" value="RecA protein, C-terminal domain"/>
    <property type="match status" value="1"/>
</dbReference>
<dbReference type="PROSITE" id="PS00321">
    <property type="entry name" value="RECA_1"/>
    <property type="match status" value="1"/>
</dbReference>
<dbReference type="PROSITE" id="PS50162">
    <property type="entry name" value="RECA_2"/>
    <property type="match status" value="1"/>
</dbReference>
<dbReference type="PROSITE" id="PS50163">
    <property type="entry name" value="RECA_3"/>
    <property type="match status" value="1"/>
</dbReference>
<comment type="function">
    <text evidence="1">Can catalyze the hydrolysis of ATP in the presence of single-stranded DNA, the ATP-dependent uptake of single-stranded DNA by duplex DNA, and the ATP-dependent hybridization of homologous single-stranded DNAs. It interacts with LexA causing its activation and leading to its autocatalytic cleavage.</text>
</comment>
<comment type="subcellular location">
    <subcellularLocation>
        <location evidence="1">Cytoplasm</location>
    </subcellularLocation>
</comment>
<comment type="similarity">
    <text evidence="1">Belongs to the RecA family.</text>
</comment>
<evidence type="ECO:0000255" key="1">
    <source>
        <dbReference type="HAMAP-Rule" id="MF_00268"/>
    </source>
</evidence>
<protein>
    <recommendedName>
        <fullName evidence="1">Protein RecA</fullName>
    </recommendedName>
    <alternativeName>
        <fullName evidence="1">Recombinase A</fullName>
    </alternativeName>
</protein>
<organism>
    <name type="scientific">Ehrlichia canis (strain Jake)</name>
    <dbReference type="NCBI Taxonomy" id="269484"/>
    <lineage>
        <taxon>Bacteria</taxon>
        <taxon>Pseudomonadati</taxon>
        <taxon>Pseudomonadota</taxon>
        <taxon>Alphaproteobacteria</taxon>
        <taxon>Rickettsiales</taxon>
        <taxon>Anaplasmataceae</taxon>
        <taxon>Ehrlichia</taxon>
    </lineage>
</organism>
<feature type="chain" id="PRO_1000047915" description="Protein RecA">
    <location>
        <begin position="1"/>
        <end position="357"/>
    </location>
</feature>
<feature type="binding site" evidence="1">
    <location>
        <begin position="71"/>
        <end position="78"/>
    </location>
    <ligand>
        <name>ATP</name>
        <dbReference type="ChEBI" id="CHEBI:30616"/>
    </ligand>
</feature>
<keyword id="KW-0067">ATP-binding</keyword>
<keyword id="KW-0963">Cytoplasm</keyword>
<keyword id="KW-0227">DNA damage</keyword>
<keyword id="KW-0233">DNA recombination</keyword>
<keyword id="KW-0234">DNA repair</keyword>
<keyword id="KW-0238">DNA-binding</keyword>
<keyword id="KW-0547">Nucleotide-binding</keyword>
<keyword id="KW-0742">SOS response</keyword>
<accession>Q3YQT7</accession>
<sequence>MSDSKNLNQERQKALDNAISQIEKAFGRGAIMKLKQGAIEKIDSISTGSIALDTALGIGGFPKGRIVEIFGPESSGKTTLALHVIAESQKKGGNCAFIDAEHALDIMYARKLGVNTGDLIVSQPDTGEQALHIVEYLVCSGAIDVIVVDSVAALTPRAEIEGDMGDQHMGLQARLLSHALRKLTSIVSKANCVLIFINQIRMKIGVVYGNPETTTGGNALKFYSSVRLDIRKVSAIKDKDLIIGNQTKVKVVKNKVAPPFKQVDFDIMYNEGISKVGEIIDMGVKLNIIEKAGAYYSYNGIRLGQGKENAKSYLKTNYTTADEIEQKIRNMLASDSDVTCFNTEGSDNLHEVEEAIF</sequence>
<gene>
    <name evidence="1" type="primary">recA</name>
    <name type="ordered locus">Ecaj_0887</name>
</gene>
<name>RECA_EHRCJ</name>
<reference key="1">
    <citation type="journal article" date="2006" name="J. Bacteriol.">
        <title>The genome of the obligately intracellular bacterium Ehrlichia canis reveals themes of complex membrane structure and immune evasion strategies.</title>
        <authorList>
            <person name="Mavromatis K."/>
            <person name="Doyle C.K."/>
            <person name="Lykidis A."/>
            <person name="Ivanova N."/>
            <person name="Francino M.P."/>
            <person name="Chain P."/>
            <person name="Shin M."/>
            <person name="Malfatti S."/>
            <person name="Larimer F."/>
            <person name="Copeland A."/>
            <person name="Detter J.C."/>
            <person name="Land M."/>
            <person name="Richardson P.M."/>
            <person name="Yu X.J."/>
            <person name="Walker D.H."/>
            <person name="McBride J.W."/>
            <person name="Kyrpides N.C."/>
        </authorList>
    </citation>
    <scope>NUCLEOTIDE SEQUENCE [LARGE SCALE GENOMIC DNA]</scope>
    <source>
        <strain>Jake</strain>
    </source>
</reference>
<proteinExistence type="inferred from homology"/>